<dbReference type="EMBL" id="AP008934">
    <property type="protein sequence ID" value="BAE19107.1"/>
    <property type="status" value="ALT_SEQ"/>
    <property type="molecule type" value="Genomic_DNA"/>
</dbReference>
<dbReference type="SMR" id="Q49VV3"/>
<dbReference type="KEGG" id="ssp:SSP1962"/>
<dbReference type="eggNOG" id="COG1186">
    <property type="taxonomic scope" value="Bacteria"/>
</dbReference>
<dbReference type="HOGENOM" id="CLU_036856_6_0_9"/>
<dbReference type="OrthoDB" id="9806673at2"/>
<dbReference type="Proteomes" id="UP000006371">
    <property type="component" value="Chromosome"/>
</dbReference>
<dbReference type="GO" id="GO:0005737">
    <property type="term" value="C:cytoplasm"/>
    <property type="evidence" value="ECO:0007669"/>
    <property type="project" value="UniProtKB-SubCell"/>
</dbReference>
<dbReference type="GO" id="GO:0016149">
    <property type="term" value="F:translation release factor activity, codon specific"/>
    <property type="evidence" value="ECO:0007669"/>
    <property type="project" value="UniProtKB-UniRule"/>
</dbReference>
<dbReference type="GO" id="GO:0075523">
    <property type="term" value="P:viral translational frameshifting"/>
    <property type="evidence" value="ECO:0007669"/>
    <property type="project" value="UniProtKB-KW"/>
</dbReference>
<dbReference type="FunFam" id="3.30.160.20:FF:000010">
    <property type="entry name" value="Peptide chain release factor 2"/>
    <property type="match status" value="1"/>
</dbReference>
<dbReference type="Gene3D" id="3.30.160.20">
    <property type="match status" value="1"/>
</dbReference>
<dbReference type="Gene3D" id="3.30.70.1660">
    <property type="match status" value="1"/>
</dbReference>
<dbReference type="Gene3D" id="1.20.58.410">
    <property type="entry name" value="Release factor"/>
    <property type="match status" value="1"/>
</dbReference>
<dbReference type="HAMAP" id="MF_00094">
    <property type="entry name" value="Rel_fac_2"/>
    <property type="match status" value="1"/>
</dbReference>
<dbReference type="InterPro" id="IPR005139">
    <property type="entry name" value="PCRF"/>
</dbReference>
<dbReference type="InterPro" id="IPR000352">
    <property type="entry name" value="Pep_chain_release_fac_I"/>
</dbReference>
<dbReference type="InterPro" id="IPR045853">
    <property type="entry name" value="Pep_chain_release_fac_I_sf"/>
</dbReference>
<dbReference type="InterPro" id="IPR004374">
    <property type="entry name" value="PrfB"/>
</dbReference>
<dbReference type="NCBIfam" id="TIGR00020">
    <property type="entry name" value="prfB"/>
    <property type="match status" value="1"/>
</dbReference>
<dbReference type="PANTHER" id="PTHR43116:SF3">
    <property type="entry name" value="CLASS I PEPTIDE CHAIN RELEASE FACTOR"/>
    <property type="match status" value="1"/>
</dbReference>
<dbReference type="PANTHER" id="PTHR43116">
    <property type="entry name" value="PEPTIDE CHAIN RELEASE FACTOR 2"/>
    <property type="match status" value="1"/>
</dbReference>
<dbReference type="Pfam" id="PF03462">
    <property type="entry name" value="PCRF"/>
    <property type="match status" value="1"/>
</dbReference>
<dbReference type="Pfam" id="PF00472">
    <property type="entry name" value="RF-1"/>
    <property type="match status" value="1"/>
</dbReference>
<dbReference type="SMART" id="SM00937">
    <property type="entry name" value="PCRF"/>
    <property type="match status" value="1"/>
</dbReference>
<dbReference type="SUPFAM" id="SSF75620">
    <property type="entry name" value="Release factor"/>
    <property type="match status" value="1"/>
</dbReference>
<dbReference type="PROSITE" id="PS00745">
    <property type="entry name" value="RF_PROK_I"/>
    <property type="match status" value="1"/>
</dbReference>
<comment type="function">
    <text evidence="2">Peptide chain release factor 2 directs the termination of translation in response to the peptide chain termination codons UGA and UAA.</text>
</comment>
<comment type="subcellular location">
    <subcellularLocation>
        <location evidence="2">Cytoplasm</location>
    </subcellularLocation>
</comment>
<comment type="PTM">
    <text evidence="2">Methylated by PrmC. Methylation increases the termination efficiency of RF2.</text>
</comment>
<comment type="miscellaneous">
    <text evidence="1">The gene for this protein contains a UGA in-frame termination codon after Leu-24; a naturally occurring frameshift enables complete translation of RF-2. This provides a mechanism for the protein to regulate its own production (By similarity).</text>
</comment>
<comment type="similarity">
    <text evidence="2">Belongs to the prokaryotic/mitochondrial release factor family.</text>
</comment>
<reference key="1">
    <citation type="journal article" date="2005" name="Proc. Natl. Acad. Sci. U.S.A.">
        <title>Whole genome sequence of Staphylococcus saprophyticus reveals the pathogenesis of uncomplicated urinary tract infection.</title>
        <authorList>
            <person name="Kuroda M."/>
            <person name="Yamashita A."/>
            <person name="Hirakawa H."/>
            <person name="Kumano M."/>
            <person name="Morikawa K."/>
            <person name="Higashide M."/>
            <person name="Maruyama A."/>
            <person name="Inose Y."/>
            <person name="Matoba K."/>
            <person name="Toh H."/>
            <person name="Kuhara S."/>
            <person name="Hattori M."/>
            <person name="Ohta T."/>
        </authorList>
    </citation>
    <scope>NUCLEOTIDE SEQUENCE [LARGE SCALE GENOMIC DNA]</scope>
    <source>
        <strain>ATCC 15305 / DSM 20229 / NCIMB 8711 / NCTC 7292 / S-41</strain>
    </source>
</reference>
<organism>
    <name type="scientific">Staphylococcus saprophyticus subsp. saprophyticus (strain ATCC 15305 / DSM 20229 / NCIMB 8711 / NCTC 7292 / S-41)</name>
    <dbReference type="NCBI Taxonomy" id="342451"/>
    <lineage>
        <taxon>Bacteria</taxon>
        <taxon>Bacillati</taxon>
        <taxon>Bacillota</taxon>
        <taxon>Bacilli</taxon>
        <taxon>Bacillales</taxon>
        <taxon>Staphylococcaceae</taxon>
        <taxon>Staphylococcus</taxon>
    </lineage>
</organism>
<sequence>MELSEIKRNIDTYNEKLEQLRGSLDLEAKETNIQEYEEMMTDPTFWDNQEKAQDVIDKNNALKSVVNAYRTLESELEDMDTTRALLLEEDDETMKQDLEQSVQDFKNELDQFELQLLLDGPYDANNAIMELHPGAGGTESQDWTNMLLRMYQRYCEQKGFNVEIADYLPGDEAGVKSVTLIVKGHNAYGYLKAEKGVHRLVRISPFDSSGRRHTSFASCDVIPQFNNTEIEIDINPDDITVDTFRASGAGGQHINKTESAIRITHHPTGIVVNNQNERSQIKNREAAMKTLKSKLYQLKIEEQEQEMAEIRGEQKEIGWGSQIRSYVFHPYAMVKDHRTNEETGKVDAVMDGDIGPFIEAFLRSQMDQHENEG</sequence>
<feature type="chain" id="PRO_0000249578" description="Peptide chain release factor 2">
    <location>
        <begin position="1"/>
        <end position="373"/>
    </location>
</feature>
<feature type="modified residue" description="N5-methylglutamine" evidence="2">
    <location>
        <position position="252"/>
    </location>
</feature>
<evidence type="ECO:0000250" key="1"/>
<evidence type="ECO:0000255" key="2">
    <source>
        <dbReference type="HAMAP-Rule" id="MF_00094"/>
    </source>
</evidence>
<keyword id="KW-0963">Cytoplasm</keyword>
<keyword id="KW-0488">Methylation</keyword>
<keyword id="KW-0648">Protein biosynthesis</keyword>
<keyword id="KW-1185">Reference proteome</keyword>
<keyword id="KW-0688">Ribosomal frameshifting</keyword>
<name>RF2_STAS1</name>
<protein>
    <recommendedName>
        <fullName evidence="2">Peptide chain release factor 2</fullName>
        <shortName evidence="2">RF-2</shortName>
    </recommendedName>
</protein>
<proteinExistence type="inferred from homology"/>
<gene>
    <name evidence="2" type="primary">prfB</name>
    <name type="ordered locus">SSP1962</name>
</gene>
<accession>Q49VV3</accession>